<sequence length="360" mass="41655">MPPTAVTEATAVPGSNVTTKDPAKDTILTPRFYTTDFEAMAAMDLRPNEAELEAICEEFRKDYNRHHFVRNGEFDGAADQLDPETRKVFVEFLEQSCTSEFSGFLLYKELSRRIKTKNPLLAECFSHMARDEARHAGFLNKSMSDFGLQLDLGFLTSSKSYTFFKPKFIFYATYLSEKIGYWRYITIFRHLEQNPDSKIFPIFNFFENWCQDENRHGDFFDALMKAQPETVRGLRARLWCRFFLLAVFATMYVRDVARKEFYEALGLDAREYDRLVIDKTNENTARVFPVVLDVKNPRFYNGLERLVNNNAALSAVDATQAPAPIKLLRKLPHWVANGAQMASLFLMAPIRSDRYHPSVR</sequence>
<reference key="1">
    <citation type="journal article" date="2006" name="Proc. Natl. Acad. Sci. U.S.A.">
        <title>Genome sequence of Synechococcus CC9311: insights into adaptation to a coastal environment.</title>
        <authorList>
            <person name="Palenik B."/>
            <person name="Ren Q."/>
            <person name="Dupont C.L."/>
            <person name="Myers G.S."/>
            <person name="Heidelberg J.F."/>
            <person name="Badger J.H."/>
            <person name="Madupu R."/>
            <person name="Nelson W.C."/>
            <person name="Brinkac L.M."/>
            <person name="Dodson R.J."/>
            <person name="Durkin A.S."/>
            <person name="Daugherty S.C."/>
            <person name="Sullivan S.A."/>
            <person name="Khouri H."/>
            <person name="Mohamoud Y."/>
            <person name="Halpin R."/>
            <person name="Paulsen I.T."/>
        </authorList>
    </citation>
    <scope>NUCLEOTIDE SEQUENCE [LARGE SCALE GENOMIC DNA]</scope>
    <source>
        <strain>CC9311</strain>
    </source>
</reference>
<protein>
    <recommendedName>
        <fullName evidence="1">Magnesium-protoporphyrin IX monomethyl ester [oxidative] cyclase</fullName>
        <shortName evidence="1">Mg-protoporphyrin IX monomethyl ester oxidative cyclase</shortName>
        <ecNumber evidence="1">1.14.13.81</ecNumber>
    </recommendedName>
</protein>
<organism>
    <name type="scientific">Synechococcus sp. (strain CC9311)</name>
    <dbReference type="NCBI Taxonomy" id="64471"/>
    <lineage>
        <taxon>Bacteria</taxon>
        <taxon>Bacillati</taxon>
        <taxon>Cyanobacteriota</taxon>
        <taxon>Cyanophyceae</taxon>
        <taxon>Synechococcales</taxon>
        <taxon>Synechococcaceae</taxon>
        <taxon>Synechococcus</taxon>
    </lineage>
</organism>
<proteinExistence type="inferred from homology"/>
<accession>Q0IAL0</accession>
<keyword id="KW-0149">Chlorophyll biosynthesis</keyword>
<keyword id="KW-0408">Iron</keyword>
<keyword id="KW-0479">Metal-binding</keyword>
<keyword id="KW-0521">NADP</keyword>
<keyword id="KW-0560">Oxidoreductase</keyword>
<keyword id="KW-0602">Photosynthesis</keyword>
<keyword id="KW-1185">Reference proteome</keyword>
<evidence type="ECO:0000255" key="1">
    <source>
        <dbReference type="HAMAP-Rule" id="MF_01840"/>
    </source>
</evidence>
<evidence type="ECO:0000256" key="2">
    <source>
        <dbReference type="SAM" id="MobiDB-lite"/>
    </source>
</evidence>
<dbReference type="EC" id="1.14.13.81" evidence="1"/>
<dbReference type="EMBL" id="CP000435">
    <property type="protein sequence ID" value="ABI47230.1"/>
    <property type="molecule type" value="Genomic_DNA"/>
</dbReference>
<dbReference type="SMR" id="Q0IAL0"/>
<dbReference type="STRING" id="64471.sync_1304"/>
<dbReference type="KEGG" id="syg:sync_1304"/>
<dbReference type="eggNOG" id="COG1633">
    <property type="taxonomic scope" value="Bacteria"/>
</dbReference>
<dbReference type="HOGENOM" id="CLU_048037_0_0_3"/>
<dbReference type="UniPathway" id="UPA00670"/>
<dbReference type="Proteomes" id="UP000001961">
    <property type="component" value="Chromosome"/>
</dbReference>
<dbReference type="GO" id="GO:0005506">
    <property type="term" value="F:iron ion binding"/>
    <property type="evidence" value="ECO:0007669"/>
    <property type="project" value="UniProtKB-UniRule"/>
</dbReference>
<dbReference type="GO" id="GO:0048529">
    <property type="term" value="F:magnesium-protoporphyrin IX monomethyl ester (oxidative) cyclase activity"/>
    <property type="evidence" value="ECO:0007669"/>
    <property type="project" value="UniProtKB-UniRule"/>
</dbReference>
<dbReference type="GO" id="GO:0036068">
    <property type="term" value="P:light-independent chlorophyll biosynthetic process"/>
    <property type="evidence" value="ECO:0007669"/>
    <property type="project" value="UniProtKB-UniRule"/>
</dbReference>
<dbReference type="GO" id="GO:0015979">
    <property type="term" value="P:photosynthesis"/>
    <property type="evidence" value="ECO:0007669"/>
    <property type="project" value="UniProtKB-UniRule"/>
</dbReference>
<dbReference type="CDD" id="cd01047">
    <property type="entry name" value="ACSF"/>
    <property type="match status" value="1"/>
</dbReference>
<dbReference type="HAMAP" id="MF_01840">
    <property type="entry name" value="AcsF"/>
    <property type="match status" value="1"/>
</dbReference>
<dbReference type="InterPro" id="IPR008434">
    <property type="entry name" value="AcsF"/>
</dbReference>
<dbReference type="InterPro" id="IPR009078">
    <property type="entry name" value="Ferritin-like_SF"/>
</dbReference>
<dbReference type="InterPro" id="IPR003251">
    <property type="entry name" value="Rr_diiron-bd_dom"/>
</dbReference>
<dbReference type="NCBIfam" id="TIGR02029">
    <property type="entry name" value="AcsF"/>
    <property type="match status" value="1"/>
</dbReference>
<dbReference type="NCBIfam" id="NF010172">
    <property type="entry name" value="PRK13654.1"/>
    <property type="match status" value="1"/>
</dbReference>
<dbReference type="PANTHER" id="PTHR31053">
    <property type="entry name" value="MAGNESIUM-PROTOPORPHYRIN IX MONOMETHYL ESTER [OXIDATIVE] CYCLASE, CHLOROPLASTIC"/>
    <property type="match status" value="1"/>
</dbReference>
<dbReference type="PANTHER" id="PTHR31053:SF2">
    <property type="entry name" value="MAGNESIUM-PROTOPORPHYRIN IX MONOMETHYL ESTER [OXIDATIVE] CYCLASE, CHLOROPLASTIC"/>
    <property type="match status" value="1"/>
</dbReference>
<dbReference type="Pfam" id="PF02915">
    <property type="entry name" value="Rubrerythrin"/>
    <property type="match status" value="1"/>
</dbReference>
<dbReference type="SUPFAM" id="SSF47240">
    <property type="entry name" value="Ferritin-like"/>
    <property type="match status" value="1"/>
</dbReference>
<gene>
    <name evidence="1" type="primary">acsF</name>
    <name type="ordered locus">sync_1304</name>
</gene>
<name>ACSF_SYNS3</name>
<feature type="chain" id="PRO_1000070555" description="Magnesium-protoporphyrin IX monomethyl ester [oxidative] cyclase">
    <location>
        <begin position="1"/>
        <end position="360"/>
    </location>
</feature>
<feature type="region of interest" description="Disordered" evidence="2">
    <location>
        <begin position="1"/>
        <end position="21"/>
    </location>
</feature>
<comment type="function">
    <text evidence="1">Catalyzes the formation of the isocyclic ring in chlorophyll biosynthesis. Mediates the cyclase reaction, which results in the formation of divinylprotochlorophyllide (Pchlide) characteristic of all chlorophylls from magnesium-protoporphyrin IX 13-monomethyl ester (MgPMME).</text>
</comment>
<comment type="catalytic activity">
    <reaction evidence="1">
        <text>Mg-protoporphyrin IX 13-monomethyl ester + 3 NADPH + 3 O2 + 2 H(+) = 3,8-divinyl protochlorophyllide a + 3 NADP(+) + 5 H2O</text>
        <dbReference type="Rhea" id="RHEA:33235"/>
        <dbReference type="ChEBI" id="CHEBI:15377"/>
        <dbReference type="ChEBI" id="CHEBI:15378"/>
        <dbReference type="ChEBI" id="CHEBI:15379"/>
        <dbReference type="ChEBI" id="CHEBI:57783"/>
        <dbReference type="ChEBI" id="CHEBI:58349"/>
        <dbReference type="ChEBI" id="CHEBI:58632"/>
        <dbReference type="ChEBI" id="CHEBI:60491"/>
        <dbReference type="EC" id="1.14.13.81"/>
    </reaction>
</comment>
<comment type="cofactor">
    <cofactor evidence="1">
        <name>Fe cation</name>
        <dbReference type="ChEBI" id="CHEBI:24875"/>
    </cofactor>
</comment>
<comment type="pathway">
    <text evidence="1">Porphyrin-containing compound metabolism; chlorophyll biosynthesis (light-independent).</text>
</comment>
<comment type="similarity">
    <text evidence="1">Belongs to the AcsF family.</text>
</comment>